<name>RECF_BIFAA</name>
<reference key="1">
    <citation type="submission" date="2006-12" db="EMBL/GenBank/DDBJ databases">
        <title>Bifidobacterium adolescentis complete genome sequence.</title>
        <authorList>
            <person name="Suzuki T."/>
            <person name="Tsuda Y."/>
            <person name="Kanou N."/>
            <person name="Inoue T."/>
            <person name="Kumazaki K."/>
            <person name="Nagano S."/>
            <person name="Hirai S."/>
            <person name="Tanaka K."/>
            <person name="Watanabe K."/>
        </authorList>
    </citation>
    <scope>NUCLEOTIDE SEQUENCE [LARGE SCALE GENOMIC DNA]</scope>
    <source>
        <strain>ATCC 15703 / DSM 20083 / NCTC 11814 / E194a</strain>
    </source>
</reference>
<dbReference type="EMBL" id="AP009256">
    <property type="protein sequence ID" value="BAF38784.1"/>
    <property type="molecule type" value="Genomic_DNA"/>
</dbReference>
<dbReference type="RefSeq" id="WP_011742563.1">
    <property type="nucleotide sequence ID" value="NC_008618.1"/>
</dbReference>
<dbReference type="SMR" id="A0ZZA1"/>
<dbReference type="STRING" id="367928.BAD_0003"/>
<dbReference type="PaxDb" id="1680-BADO_0003"/>
<dbReference type="GeneID" id="4556625"/>
<dbReference type="KEGG" id="bad:BAD_0003"/>
<dbReference type="HOGENOM" id="CLU_040267_1_1_11"/>
<dbReference type="Proteomes" id="UP000008702">
    <property type="component" value="Chromosome"/>
</dbReference>
<dbReference type="GO" id="GO:0005737">
    <property type="term" value="C:cytoplasm"/>
    <property type="evidence" value="ECO:0007669"/>
    <property type="project" value="UniProtKB-SubCell"/>
</dbReference>
<dbReference type="GO" id="GO:0005524">
    <property type="term" value="F:ATP binding"/>
    <property type="evidence" value="ECO:0007669"/>
    <property type="project" value="UniProtKB-UniRule"/>
</dbReference>
<dbReference type="GO" id="GO:0003697">
    <property type="term" value="F:single-stranded DNA binding"/>
    <property type="evidence" value="ECO:0007669"/>
    <property type="project" value="UniProtKB-UniRule"/>
</dbReference>
<dbReference type="GO" id="GO:0006260">
    <property type="term" value="P:DNA replication"/>
    <property type="evidence" value="ECO:0007669"/>
    <property type="project" value="UniProtKB-UniRule"/>
</dbReference>
<dbReference type="GO" id="GO:0000731">
    <property type="term" value="P:DNA synthesis involved in DNA repair"/>
    <property type="evidence" value="ECO:0007669"/>
    <property type="project" value="TreeGrafter"/>
</dbReference>
<dbReference type="GO" id="GO:0006302">
    <property type="term" value="P:double-strand break repair"/>
    <property type="evidence" value="ECO:0007669"/>
    <property type="project" value="TreeGrafter"/>
</dbReference>
<dbReference type="GO" id="GO:0009432">
    <property type="term" value="P:SOS response"/>
    <property type="evidence" value="ECO:0007669"/>
    <property type="project" value="UniProtKB-UniRule"/>
</dbReference>
<dbReference type="Gene3D" id="3.40.50.300">
    <property type="entry name" value="P-loop containing nucleotide triphosphate hydrolases"/>
    <property type="match status" value="1"/>
</dbReference>
<dbReference type="Gene3D" id="1.20.1050.90">
    <property type="entry name" value="RecF/RecN/SMC, N-terminal domain"/>
    <property type="match status" value="1"/>
</dbReference>
<dbReference type="HAMAP" id="MF_00365">
    <property type="entry name" value="RecF"/>
    <property type="match status" value="1"/>
</dbReference>
<dbReference type="InterPro" id="IPR001238">
    <property type="entry name" value="DNA-binding_RecF"/>
</dbReference>
<dbReference type="InterPro" id="IPR018078">
    <property type="entry name" value="DNA-binding_RecF_CS"/>
</dbReference>
<dbReference type="InterPro" id="IPR027417">
    <property type="entry name" value="P-loop_NTPase"/>
</dbReference>
<dbReference type="InterPro" id="IPR003395">
    <property type="entry name" value="RecF/RecN/SMC_N"/>
</dbReference>
<dbReference type="InterPro" id="IPR042174">
    <property type="entry name" value="RecF_2"/>
</dbReference>
<dbReference type="NCBIfam" id="TIGR00611">
    <property type="entry name" value="recf"/>
    <property type="match status" value="1"/>
</dbReference>
<dbReference type="PANTHER" id="PTHR32182">
    <property type="entry name" value="DNA REPLICATION AND REPAIR PROTEIN RECF"/>
    <property type="match status" value="1"/>
</dbReference>
<dbReference type="PANTHER" id="PTHR32182:SF0">
    <property type="entry name" value="DNA REPLICATION AND REPAIR PROTEIN RECF"/>
    <property type="match status" value="1"/>
</dbReference>
<dbReference type="Pfam" id="PF02463">
    <property type="entry name" value="SMC_N"/>
    <property type="match status" value="1"/>
</dbReference>
<dbReference type="SUPFAM" id="SSF52540">
    <property type="entry name" value="P-loop containing nucleoside triphosphate hydrolases"/>
    <property type="match status" value="1"/>
</dbReference>
<dbReference type="PROSITE" id="PS00617">
    <property type="entry name" value="RECF_1"/>
    <property type="match status" value="1"/>
</dbReference>
<accession>A0ZZA1</accession>
<keyword id="KW-0067">ATP-binding</keyword>
<keyword id="KW-0963">Cytoplasm</keyword>
<keyword id="KW-0227">DNA damage</keyword>
<keyword id="KW-0234">DNA repair</keyword>
<keyword id="KW-0235">DNA replication</keyword>
<keyword id="KW-0238">DNA-binding</keyword>
<keyword id="KW-0547">Nucleotide-binding</keyword>
<keyword id="KW-1185">Reference proteome</keyword>
<keyword id="KW-0742">SOS response</keyword>
<comment type="function">
    <text evidence="1">The RecF protein is involved in DNA metabolism; it is required for DNA replication and normal SOS inducibility. RecF binds preferentially to single-stranded, linear DNA. It also seems to bind ATP.</text>
</comment>
<comment type="subcellular location">
    <subcellularLocation>
        <location evidence="1">Cytoplasm</location>
    </subcellularLocation>
</comment>
<comment type="similarity">
    <text evidence="1">Belongs to the RecF family.</text>
</comment>
<feature type="chain" id="PRO_1000133675" description="DNA replication and repair protein RecF">
    <location>
        <begin position="1"/>
        <end position="403"/>
    </location>
</feature>
<feature type="binding site" evidence="1">
    <location>
        <begin position="30"/>
        <end position="37"/>
    </location>
    <ligand>
        <name>ATP</name>
        <dbReference type="ChEBI" id="CHEBI:30616"/>
    </ligand>
</feature>
<evidence type="ECO:0000255" key="1">
    <source>
        <dbReference type="HAMAP-Rule" id="MF_00365"/>
    </source>
</evidence>
<sequence>MHISRLALDHYRSWDHCVLDFEPGINILQGSNGLGKTNIVEAVEVLSTGSSHRTSSSLPLVEKGHPSATVRANVEDAGEQRTYEITIAARGANRARVDGGKSQYMRDIVGWVPSVSFTPEDQRLVSGDPATRRNFLNQAASLLLPRYAQSLQQFTHVAKQRAALLKQLSDGSGIDPEYGRQAVLSGLEVWTGQFIALGVQLTKDRNDVIGLLREPFTRIYASLAGEEEQADLVYEPSFDEVLLFDEPAAEISRHFQRIYPGEVARGQNLIGPQRDDLTLRLNDMPAREFASNGEMWTMALALKMALYEVVSAQRDVKPIVILDDVFAQLDESRRGQILDFARRQDQVLITVAAASDIPQGEAHVIDVAALRAQSQETDGDIAAMAAMLAAGRGAQSQGIEAES</sequence>
<organism>
    <name type="scientific">Bifidobacterium adolescentis (strain ATCC 15703 / DSM 20083 / NCTC 11814 / E194a)</name>
    <dbReference type="NCBI Taxonomy" id="367928"/>
    <lineage>
        <taxon>Bacteria</taxon>
        <taxon>Bacillati</taxon>
        <taxon>Actinomycetota</taxon>
        <taxon>Actinomycetes</taxon>
        <taxon>Bifidobacteriales</taxon>
        <taxon>Bifidobacteriaceae</taxon>
        <taxon>Bifidobacterium</taxon>
    </lineage>
</organism>
<proteinExistence type="inferred from homology"/>
<gene>
    <name evidence="1" type="primary">recF</name>
    <name type="ordered locus">BAD_0003</name>
</gene>
<protein>
    <recommendedName>
        <fullName evidence="1">DNA replication and repair protein RecF</fullName>
    </recommendedName>
</protein>